<feature type="chain" id="PRO_1000088005" description="UPF0182 protein CMS1887">
    <location>
        <begin position="1"/>
        <end position="971"/>
    </location>
</feature>
<feature type="transmembrane region" description="Helical" evidence="1">
    <location>
        <begin position="16"/>
        <end position="36"/>
    </location>
</feature>
<feature type="transmembrane region" description="Helical" evidence="1">
    <location>
        <begin position="56"/>
        <end position="76"/>
    </location>
</feature>
<feature type="transmembrane region" description="Helical" evidence="1">
    <location>
        <begin position="108"/>
        <end position="128"/>
    </location>
</feature>
<feature type="transmembrane region" description="Helical" evidence="1">
    <location>
        <begin position="161"/>
        <end position="181"/>
    </location>
</feature>
<feature type="transmembrane region" description="Helical" evidence="1">
    <location>
        <begin position="205"/>
        <end position="225"/>
    </location>
</feature>
<feature type="transmembrane region" description="Helical" evidence="1">
    <location>
        <begin position="255"/>
        <end position="275"/>
    </location>
</feature>
<feature type="transmembrane region" description="Helical" evidence="1">
    <location>
        <begin position="281"/>
        <end position="301"/>
    </location>
</feature>
<feature type="region of interest" description="Disordered" evidence="2">
    <location>
        <begin position="687"/>
        <end position="706"/>
    </location>
</feature>
<feature type="region of interest" description="Disordered" evidence="2">
    <location>
        <begin position="874"/>
        <end position="924"/>
    </location>
</feature>
<feature type="compositionally biased region" description="Polar residues" evidence="2">
    <location>
        <begin position="687"/>
        <end position="702"/>
    </location>
</feature>
<feature type="compositionally biased region" description="Low complexity" evidence="2">
    <location>
        <begin position="884"/>
        <end position="900"/>
    </location>
</feature>
<feature type="compositionally biased region" description="Low complexity" evidence="2">
    <location>
        <begin position="907"/>
        <end position="921"/>
    </location>
</feature>
<gene>
    <name type="ordered locus">CMS1887</name>
</gene>
<name>Y1887_CLASE</name>
<keyword id="KW-1003">Cell membrane</keyword>
<keyword id="KW-0472">Membrane</keyword>
<keyword id="KW-0812">Transmembrane</keyword>
<keyword id="KW-1133">Transmembrane helix</keyword>
<reference key="1">
    <citation type="journal article" date="2008" name="J. Bacteriol.">
        <title>Genome of the actinomycete plant pathogen Clavibacter michiganensis subsp. sepedonicus suggests recent niche adaptation.</title>
        <authorList>
            <person name="Bentley S.D."/>
            <person name="Corton C."/>
            <person name="Brown S.E."/>
            <person name="Barron A."/>
            <person name="Clark L."/>
            <person name="Doggett J."/>
            <person name="Harris B."/>
            <person name="Ormond D."/>
            <person name="Quail M.A."/>
            <person name="May G."/>
            <person name="Francis D."/>
            <person name="Knudson D."/>
            <person name="Parkhill J."/>
            <person name="Ishimaru C.A."/>
        </authorList>
    </citation>
    <scope>NUCLEOTIDE SEQUENCE [LARGE SCALE GENOMIC DNA]</scope>
    <source>
        <strain>ATCC 33113 / DSM 20744 / JCM 9667 / LMG 2889 / ICMP 2535 / C-1</strain>
    </source>
</reference>
<protein>
    <recommendedName>
        <fullName evidence="1">UPF0182 protein CMS1887</fullName>
    </recommendedName>
</protein>
<sequence length="971" mass="105009">MTSTSARPARRSRAPLAITAAIIAALVIAFFIFAGFYADVLWYDQLGYLGVLLTQWGAGIALFFIGFLAMAIPVFVSIQVAYRSRPVYAKLNSQLDRYQQVIEPLRRLAMFAIPAVFGLFAGVSASSGWQRTLLWLNRTPSGTTDPQFGLDTSFYLFELPFYHAVVGFASAVVIISMLGVLATSYLYGAVRFTGREVRISKSSRIQIAITAGVYFLLQGVSIWLDQYSSVVNTANGGLFTGAAFSDVNAVIPGRTILAGIAVVVAVMFIITAAIGRWRLPIIGTAGLIVASILIGTAYPAIVQRFQVEPNERSLESPFYERNIEATRAAYGLADIEEIPYDATTDTTPGALREDAATTANIRILDPAVVGDAFSQLQQFRQYYQFGDNLDVDRYQIDGRVQDTVVAVRELSPTNTGTSWVNQHLVYTHGYSLVAAYGTQRTSDGQPVFLESGIPASGDLGDFEPRVYFGEDSPDYSIVGGPESGDKVELDYPSGVDGADETYTTFQGDGGPKVDNVFKRLIYALKFQSEQIFLANQINDQSQILYDRDPAERVGKVAPYLTVDKDPYPSVVDGRVVWIVDGYTTSDQYPYSQQTQPLVPTDRINYIRNSVKATVDAYDGKVTLYAWDTDDPILKTWQKVFPSTLKPIADISGELMSHLRFPADMFKVQRAVLGKYHVTDPGSIYSNQDLWTTPNDPTATTEAGTPASLQPPYYLTMQMPGQDSPRFSLYSTFIPPATQDTSRSVLTGYLGVDSDAGSTAGEKAADYGKLRLLTLPNDDTIPAPTQIQNNFNSDTNVANQLNLLERGGRTSVVRGNLLTLPVGGGLLYVQPVYVRSTGDTSYPLLRKVLVAFGDKIAFEDTLDAALDSIFEGDSGATAGDEDVVPTTPADGAAGDGSTDGATDGGTGSTPTPAPTASPAAPAQDVQAALDAANTALQERQAAYASGDLVAAAQADQRFTEAVQRAYELSQQQ</sequence>
<accession>B0RE27</accession>
<proteinExistence type="inferred from homology"/>
<evidence type="ECO:0000255" key="1">
    <source>
        <dbReference type="HAMAP-Rule" id="MF_01600"/>
    </source>
</evidence>
<evidence type="ECO:0000256" key="2">
    <source>
        <dbReference type="SAM" id="MobiDB-lite"/>
    </source>
</evidence>
<comment type="subcellular location">
    <subcellularLocation>
        <location evidence="1">Cell membrane</location>
        <topology evidence="1">Multi-pass membrane protein</topology>
    </subcellularLocation>
</comment>
<comment type="similarity">
    <text evidence="1">Belongs to the UPF0182 family.</text>
</comment>
<dbReference type="EMBL" id="AM849034">
    <property type="protein sequence ID" value="CAQ01989.1"/>
    <property type="molecule type" value="Genomic_DNA"/>
</dbReference>
<dbReference type="RefSeq" id="WP_012299223.1">
    <property type="nucleotide sequence ID" value="NC_010407.1"/>
</dbReference>
<dbReference type="SMR" id="B0RE27"/>
<dbReference type="STRING" id="31964.CMS1887"/>
<dbReference type="KEGG" id="cms:CMS1887"/>
<dbReference type="eggNOG" id="COG1615">
    <property type="taxonomic scope" value="Bacteria"/>
</dbReference>
<dbReference type="HOGENOM" id="CLU_007733_1_0_11"/>
<dbReference type="Proteomes" id="UP000001318">
    <property type="component" value="Chromosome"/>
</dbReference>
<dbReference type="GO" id="GO:0005576">
    <property type="term" value="C:extracellular region"/>
    <property type="evidence" value="ECO:0007669"/>
    <property type="project" value="TreeGrafter"/>
</dbReference>
<dbReference type="GO" id="GO:0005886">
    <property type="term" value="C:plasma membrane"/>
    <property type="evidence" value="ECO:0007669"/>
    <property type="project" value="UniProtKB-SubCell"/>
</dbReference>
<dbReference type="HAMAP" id="MF_01600">
    <property type="entry name" value="UPF0182"/>
    <property type="match status" value="1"/>
</dbReference>
<dbReference type="InterPro" id="IPR005372">
    <property type="entry name" value="UPF0182"/>
</dbReference>
<dbReference type="PANTHER" id="PTHR39344">
    <property type="entry name" value="UPF0182 PROTEIN SLL1060"/>
    <property type="match status" value="1"/>
</dbReference>
<dbReference type="PANTHER" id="PTHR39344:SF1">
    <property type="entry name" value="UPF0182 PROTEIN SLL1060"/>
    <property type="match status" value="1"/>
</dbReference>
<dbReference type="Pfam" id="PF03699">
    <property type="entry name" value="UPF0182"/>
    <property type="match status" value="1"/>
</dbReference>
<organism>
    <name type="scientific">Clavibacter sepedonicus</name>
    <name type="common">Clavibacter michiganensis subsp. sepedonicus</name>
    <dbReference type="NCBI Taxonomy" id="31964"/>
    <lineage>
        <taxon>Bacteria</taxon>
        <taxon>Bacillati</taxon>
        <taxon>Actinomycetota</taxon>
        <taxon>Actinomycetes</taxon>
        <taxon>Micrococcales</taxon>
        <taxon>Microbacteriaceae</taxon>
        <taxon>Clavibacter</taxon>
    </lineage>
</organism>